<organism>
    <name type="scientific">Homo sapiens</name>
    <name type="common">Human</name>
    <dbReference type="NCBI Taxonomy" id="9606"/>
    <lineage>
        <taxon>Eukaryota</taxon>
        <taxon>Metazoa</taxon>
        <taxon>Chordata</taxon>
        <taxon>Craniata</taxon>
        <taxon>Vertebrata</taxon>
        <taxon>Euteleostomi</taxon>
        <taxon>Mammalia</taxon>
        <taxon>Eutheria</taxon>
        <taxon>Euarchontoglires</taxon>
        <taxon>Primates</taxon>
        <taxon>Haplorrhini</taxon>
        <taxon>Catarrhini</taxon>
        <taxon>Hominidae</taxon>
        <taxon>Homo</taxon>
    </lineage>
</organism>
<comment type="function">
    <text evidence="1">Essential for hematopietic stem cell development through the regulation of p53/TP53 pathway.</text>
</comment>
<comment type="subcellular location">
    <subcellularLocation>
        <location evidence="2">Nucleus</location>
        <location evidence="2">Nucleolus</location>
    </subcellularLocation>
</comment>
<comment type="sequence caution" evidence="3">
    <conflict type="erroneous initiation">
        <sequence resource="EMBL-CDS" id="BAA09482"/>
    </conflict>
</comment>
<dbReference type="EMBL" id="D50923">
    <property type="protein sequence ID" value="BAA09482.3"/>
    <property type="status" value="ALT_INIT"/>
    <property type="molecule type" value="mRNA"/>
</dbReference>
<dbReference type="EMBL" id="AL354983">
    <property type="status" value="NOT_ANNOTATED_CDS"/>
    <property type="molecule type" value="Genomic_DNA"/>
</dbReference>
<dbReference type="EMBL" id="AL121990">
    <property type="status" value="NOT_ANNOTATED_CDS"/>
    <property type="molecule type" value="Genomic_DNA"/>
</dbReference>
<dbReference type="EMBL" id="BC114559">
    <property type="protein sequence ID" value="AAI14560.1"/>
    <property type="molecule type" value="mRNA"/>
</dbReference>
<dbReference type="EMBL" id="BC114963">
    <property type="protein sequence ID" value="AAI14964.1"/>
    <property type="molecule type" value="mRNA"/>
</dbReference>
<dbReference type="CCDS" id="CCDS31052.1"/>
<dbReference type="RefSeq" id="NP_001300950.1">
    <property type="nucleotide sequence ID" value="NM_001314021.2"/>
</dbReference>
<dbReference type="RefSeq" id="NP_055592.2">
    <property type="nucleotide sequence ID" value="NM_014777.4"/>
</dbReference>
<dbReference type="BioGRID" id="115155">
    <property type="interactions" value="120"/>
</dbReference>
<dbReference type="FunCoup" id="Q14146">
    <property type="interactions" value="1518"/>
</dbReference>
<dbReference type="IntAct" id="Q14146">
    <property type="interactions" value="74"/>
</dbReference>
<dbReference type="STRING" id="9606.ENSP00000258243"/>
<dbReference type="CarbonylDB" id="Q14146"/>
<dbReference type="iPTMnet" id="Q14146"/>
<dbReference type="PhosphoSitePlus" id="Q14146"/>
<dbReference type="SwissPalm" id="Q14146"/>
<dbReference type="BioMuta" id="URB2"/>
<dbReference type="DMDM" id="209572635"/>
<dbReference type="jPOST" id="Q14146"/>
<dbReference type="MassIVE" id="Q14146"/>
<dbReference type="PaxDb" id="9606-ENSP00000258243"/>
<dbReference type="PeptideAtlas" id="Q14146"/>
<dbReference type="ProteomicsDB" id="59850"/>
<dbReference type="Pumba" id="Q14146"/>
<dbReference type="Antibodypedia" id="1890">
    <property type="antibodies" value="79 antibodies from 17 providers"/>
</dbReference>
<dbReference type="DNASU" id="9816"/>
<dbReference type="Ensembl" id="ENST00000258243.7">
    <property type="protein sequence ID" value="ENSP00000258243.2"/>
    <property type="gene ID" value="ENSG00000135763.10"/>
</dbReference>
<dbReference type="GeneID" id="9816"/>
<dbReference type="KEGG" id="hsa:9816"/>
<dbReference type="MANE-Select" id="ENST00000258243.7">
    <property type="protein sequence ID" value="ENSP00000258243.2"/>
    <property type="RefSeq nucleotide sequence ID" value="NM_014777.4"/>
    <property type="RefSeq protein sequence ID" value="NP_055592.2"/>
</dbReference>
<dbReference type="UCSC" id="uc001hts.1">
    <property type="organism name" value="human"/>
</dbReference>
<dbReference type="AGR" id="HGNC:28967"/>
<dbReference type="CTD" id="9816"/>
<dbReference type="DisGeNET" id="9816"/>
<dbReference type="GeneCards" id="URB2"/>
<dbReference type="HGNC" id="HGNC:28967">
    <property type="gene designation" value="URB2"/>
</dbReference>
<dbReference type="HPA" id="ENSG00000135763">
    <property type="expression patterns" value="Low tissue specificity"/>
</dbReference>
<dbReference type="MalaCards" id="URB2"/>
<dbReference type="MIM" id="619372">
    <property type="type" value="gene"/>
</dbReference>
<dbReference type="neXtProt" id="NX_Q14146"/>
<dbReference type="OpenTargets" id="ENSG00000135763"/>
<dbReference type="PharmGKB" id="PA164727496"/>
<dbReference type="VEuPathDB" id="HostDB:ENSG00000135763"/>
<dbReference type="eggNOG" id="ENOG502QWBH">
    <property type="taxonomic scope" value="Eukaryota"/>
</dbReference>
<dbReference type="GeneTree" id="ENSGT00390000009258"/>
<dbReference type="HOGENOM" id="CLU_251606_0_0_1"/>
<dbReference type="InParanoid" id="Q14146"/>
<dbReference type="OMA" id="DYNHYHK"/>
<dbReference type="OrthoDB" id="160374at2759"/>
<dbReference type="PAN-GO" id="Q14146">
    <property type="GO annotations" value="2 GO annotations based on evolutionary models"/>
</dbReference>
<dbReference type="PhylomeDB" id="Q14146"/>
<dbReference type="TreeFam" id="TF328770"/>
<dbReference type="PathwayCommons" id="Q14146"/>
<dbReference type="SignaLink" id="Q14146"/>
<dbReference type="BioGRID-ORCS" id="9816">
    <property type="hits" value="602 hits in 1158 CRISPR screens"/>
</dbReference>
<dbReference type="CD-CODE" id="91857CE7">
    <property type="entry name" value="Nucleolus"/>
</dbReference>
<dbReference type="ChiTaRS" id="URB2">
    <property type="organism name" value="human"/>
</dbReference>
<dbReference type="GenomeRNAi" id="9816"/>
<dbReference type="Pharos" id="Q14146">
    <property type="development level" value="Tbio"/>
</dbReference>
<dbReference type="PRO" id="PR:Q14146"/>
<dbReference type="Proteomes" id="UP000005640">
    <property type="component" value="Chromosome 1"/>
</dbReference>
<dbReference type="RNAct" id="Q14146">
    <property type="molecule type" value="protein"/>
</dbReference>
<dbReference type="Bgee" id="ENSG00000135763">
    <property type="expression patterns" value="Expressed in primordial germ cell in gonad and 126 other cell types or tissues"/>
</dbReference>
<dbReference type="ExpressionAtlas" id="Q14146">
    <property type="expression patterns" value="baseline and differential"/>
</dbReference>
<dbReference type="GO" id="GO:0016235">
    <property type="term" value="C:aggresome"/>
    <property type="evidence" value="ECO:0000314"/>
    <property type="project" value="HPA"/>
</dbReference>
<dbReference type="GO" id="GO:0030496">
    <property type="term" value="C:midbody"/>
    <property type="evidence" value="ECO:0000314"/>
    <property type="project" value="HGNC"/>
</dbReference>
<dbReference type="GO" id="GO:0005730">
    <property type="term" value="C:nucleolus"/>
    <property type="evidence" value="ECO:0000314"/>
    <property type="project" value="HPA"/>
</dbReference>
<dbReference type="GO" id="GO:1901796">
    <property type="term" value="P:regulation of signal transduction by p53 class mediator"/>
    <property type="evidence" value="ECO:0000250"/>
    <property type="project" value="UniProtKB"/>
</dbReference>
<dbReference type="GO" id="GO:0042254">
    <property type="term" value="P:ribosome biogenesis"/>
    <property type="evidence" value="ECO:0000318"/>
    <property type="project" value="GO_Central"/>
</dbReference>
<dbReference type="InterPro" id="IPR052609">
    <property type="entry name" value="Ribosome_Biogenesis_Reg"/>
</dbReference>
<dbReference type="InterPro" id="IPR018849">
    <property type="entry name" value="Urb2/Npa2_C"/>
</dbReference>
<dbReference type="PANTHER" id="PTHR15682">
    <property type="entry name" value="UNHEALTHY RIBOSOME BIOGENESIS PROTEIN 2 HOMOLOG"/>
    <property type="match status" value="1"/>
</dbReference>
<dbReference type="PANTHER" id="PTHR15682:SF2">
    <property type="entry name" value="UNHEALTHY RIBOSOME BIOGENESIS PROTEIN 2 HOMOLOG"/>
    <property type="match status" value="1"/>
</dbReference>
<dbReference type="Pfam" id="PF10441">
    <property type="entry name" value="Urb2"/>
    <property type="match status" value="1"/>
</dbReference>
<proteinExistence type="evidence at protein level"/>
<sequence>MAAVYSGISLKLKSKTTSWEDKLKLAHFAWISHQCFLPNKEQVLLDWARQSLVAFYKKKLELKEDIVERLWIYIDNILHSRKLQNLLKNGKTINLQISLVKIINERVAEFSLSGSQRNICAVLRCCQGILSTPALAVIYTAKQELMVALLSQLCWSACRQPEGAVVAQLFEVIHLALGHYLLILQQQVNPRRAFGDVTAHLLQPCLVLRHLLSGGTWTQAGQGQLRQVLSRDIRSQIEAMFRGGIFQPELLSSYKEGLLDQQQGDVKTGAMKNLLAPMDTVLNRLVDAGYCAASLHTSVVANSVALLYKLFLDSYFKEGNQLLCFQVLPRLFGCLKISHLQEEQSKALSTSDWTTELLVVEQLLNSVANNNIYNIAADRIRHEEAQFRFYRHVAELLINHAQAPIPAWFRCLKTLISLNHLILEPDLDDLLASAWIDAEVTEFRTKKAQEALIRTVFQTYAKLRQVPRLFEEVLGVICRPAAEALRQPVLASGPSTVLSACLLELPPSQILDTWSLVLEKFQSLVLPYLQSDADMALKSLSLSLLLHCIMFNMRSLDSSTPLPIVRRTQCMMERMMRELVQPLLALLPDTPGPEPELWLQKVSDSVLLLSYTWAQVDAMFSLNCSQYHSMSGPLIGVALEISNLPSLLPGVKTQHWKKIEKFTAQFSSLGTYCLEQLYLQKMKRTLMQTSFRSEGAIQSLRCDAAFIIGSGRKSLNQRTTASWDGQVGMVSGLTYPVAHWHLIVSNLTILISYLCPDDVGYLASVLLRTLPMGKAQEVSIDEEAYITLEKISKAFLHSPLFPEMQSLHSAFLTCVTTSCSSILCSGAQRDSGLVSQQLPWLFEKDHMVVGHWENRFAKAGPEGIEPRGEIAQNLLSLVKSDFPIQLEGEQLESILGLLEVISALQLDSLLPPYHVHYFLVLLSMAVTKLGCSCSSSLALKFLTTCYQLLGYLQKGKSARSVFKIMYGSDIFEVVLTSLFRASSRFLIEMDDPAWLEFLQVIGTFLEELMQMLIQMKLSLVLNFRKITAFLSSSKPYTEAASSKQLENQNPQGRQLLLVSLTRLCHVLGPFLKEQKLGQEAPAALSELLQQVVLQTGAVLQLCSVPGARGWRLPSVLISSVSTLLEADLGQHCRDGGADISQGSDRTLLSHVALYQGVYSQILLELPALAGHDQSFQAALQFLTLFFLAPELHPKKDSVFTSMFHSVRRVLADPEIPVQVTQDIEPHLGALFTQMLEVGTTEDLRLVMQCILQGLDVSNMWKADVQAVVSAVTLLRLLLNCPLSGEKASLLWRACPQIVTALTLLNREASQEQPVSLTVVGPVLDVLAALLRQGEEAIGNPHHVSLAFSILLTVPLDHLKPLEYGSVFPRLHNVLFSILQCHPKVMLKAIPSFLNSFNRLVFSVMREGRQKDKGSIDDLPTVLKCARLVERMYSHIAARAEEFAVFSPFMVAQYVLEVQKVTLYPAVKSLLQEGIYLILDLCIEPDVQFLRASLQPGMRDIFKELYNDYLKYHKAKHEGEKRYTA</sequence>
<keyword id="KW-0539">Nucleus</keyword>
<keyword id="KW-1267">Proteomics identification</keyword>
<keyword id="KW-1185">Reference proteome</keyword>
<name>URB2_HUMAN</name>
<gene>
    <name type="primary">URB2</name>
    <name type="synonym">KIAA0133</name>
</gene>
<protein>
    <recommendedName>
        <fullName>Unhealthy ribosome biogenesis protein 2 homolog</fullName>
    </recommendedName>
</protein>
<accession>Q14146</accession>
<accession>Q5VYC9</accession>
<reference key="1">
    <citation type="journal article" date="1995" name="DNA Res.">
        <title>Prediction of the coding sequences of unidentified human genes. IV. The coding sequences of 40 new genes (KIAA0121-KIAA0160) deduced by analysis of cDNA clones from human cell line KG-1.</title>
        <authorList>
            <person name="Nagase T."/>
            <person name="Seki N."/>
            <person name="Tanaka A."/>
            <person name="Ishikawa K."/>
            <person name="Nomura N."/>
        </authorList>
    </citation>
    <scope>NUCLEOTIDE SEQUENCE [LARGE SCALE MRNA]</scope>
    <source>
        <tissue>Bone marrow</tissue>
    </source>
</reference>
<reference key="2">
    <citation type="journal article" date="2006" name="Nature">
        <title>The DNA sequence and biological annotation of human chromosome 1.</title>
        <authorList>
            <person name="Gregory S.G."/>
            <person name="Barlow K.F."/>
            <person name="McLay K.E."/>
            <person name="Kaul R."/>
            <person name="Swarbreck D."/>
            <person name="Dunham A."/>
            <person name="Scott C.E."/>
            <person name="Howe K.L."/>
            <person name="Woodfine K."/>
            <person name="Spencer C.C.A."/>
            <person name="Jones M.C."/>
            <person name="Gillson C."/>
            <person name="Searle S."/>
            <person name="Zhou Y."/>
            <person name="Kokocinski F."/>
            <person name="McDonald L."/>
            <person name="Evans R."/>
            <person name="Phillips K."/>
            <person name="Atkinson A."/>
            <person name="Cooper R."/>
            <person name="Jones C."/>
            <person name="Hall R.E."/>
            <person name="Andrews T.D."/>
            <person name="Lloyd C."/>
            <person name="Ainscough R."/>
            <person name="Almeida J.P."/>
            <person name="Ambrose K.D."/>
            <person name="Anderson F."/>
            <person name="Andrew R.W."/>
            <person name="Ashwell R.I.S."/>
            <person name="Aubin K."/>
            <person name="Babbage A.K."/>
            <person name="Bagguley C.L."/>
            <person name="Bailey J."/>
            <person name="Beasley H."/>
            <person name="Bethel G."/>
            <person name="Bird C.P."/>
            <person name="Bray-Allen S."/>
            <person name="Brown J.Y."/>
            <person name="Brown A.J."/>
            <person name="Buckley D."/>
            <person name="Burton J."/>
            <person name="Bye J."/>
            <person name="Carder C."/>
            <person name="Chapman J.C."/>
            <person name="Clark S.Y."/>
            <person name="Clarke G."/>
            <person name="Clee C."/>
            <person name="Cobley V."/>
            <person name="Collier R.E."/>
            <person name="Corby N."/>
            <person name="Coville G.J."/>
            <person name="Davies J."/>
            <person name="Deadman R."/>
            <person name="Dunn M."/>
            <person name="Earthrowl M."/>
            <person name="Ellington A.G."/>
            <person name="Errington H."/>
            <person name="Frankish A."/>
            <person name="Frankland J."/>
            <person name="French L."/>
            <person name="Garner P."/>
            <person name="Garnett J."/>
            <person name="Gay L."/>
            <person name="Ghori M.R.J."/>
            <person name="Gibson R."/>
            <person name="Gilby L.M."/>
            <person name="Gillett W."/>
            <person name="Glithero R.J."/>
            <person name="Grafham D.V."/>
            <person name="Griffiths C."/>
            <person name="Griffiths-Jones S."/>
            <person name="Grocock R."/>
            <person name="Hammond S."/>
            <person name="Harrison E.S.I."/>
            <person name="Hart E."/>
            <person name="Haugen E."/>
            <person name="Heath P.D."/>
            <person name="Holmes S."/>
            <person name="Holt K."/>
            <person name="Howden P.J."/>
            <person name="Hunt A.R."/>
            <person name="Hunt S.E."/>
            <person name="Hunter G."/>
            <person name="Isherwood J."/>
            <person name="James R."/>
            <person name="Johnson C."/>
            <person name="Johnson D."/>
            <person name="Joy A."/>
            <person name="Kay M."/>
            <person name="Kershaw J.K."/>
            <person name="Kibukawa M."/>
            <person name="Kimberley A.M."/>
            <person name="King A."/>
            <person name="Knights A.J."/>
            <person name="Lad H."/>
            <person name="Laird G."/>
            <person name="Lawlor S."/>
            <person name="Leongamornlert D.A."/>
            <person name="Lloyd D.M."/>
            <person name="Loveland J."/>
            <person name="Lovell J."/>
            <person name="Lush M.J."/>
            <person name="Lyne R."/>
            <person name="Martin S."/>
            <person name="Mashreghi-Mohammadi M."/>
            <person name="Matthews L."/>
            <person name="Matthews N.S.W."/>
            <person name="McLaren S."/>
            <person name="Milne S."/>
            <person name="Mistry S."/>
            <person name="Moore M.J.F."/>
            <person name="Nickerson T."/>
            <person name="O'Dell C.N."/>
            <person name="Oliver K."/>
            <person name="Palmeiri A."/>
            <person name="Palmer S.A."/>
            <person name="Parker A."/>
            <person name="Patel D."/>
            <person name="Pearce A.V."/>
            <person name="Peck A.I."/>
            <person name="Pelan S."/>
            <person name="Phelps K."/>
            <person name="Phillimore B.J."/>
            <person name="Plumb R."/>
            <person name="Rajan J."/>
            <person name="Raymond C."/>
            <person name="Rouse G."/>
            <person name="Saenphimmachak C."/>
            <person name="Sehra H.K."/>
            <person name="Sheridan E."/>
            <person name="Shownkeen R."/>
            <person name="Sims S."/>
            <person name="Skuce C.D."/>
            <person name="Smith M."/>
            <person name="Steward C."/>
            <person name="Subramanian S."/>
            <person name="Sycamore N."/>
            <person name="Tracey A."/>
            <person name="Tromans A."/>
            <person name="Van Helmond Z."/>
            <person name="Wall M."/>
            <person name="Wallis J.M."/>
            <person name="White S."/>
            <person name="Whitehead S.L."/>
            <person name="Wilkinson J.E."/>
            <person name="Willey D.L."/>
            <person name="Williams H."/>
            <person name="Wilming L."/>
            <person name="Wray P.W."/>
            <person name="Wu Z."/>
            <person name="Coulson A."/>
            <person name="Vaudin M."/>
            <person name="Sulston J.E."/>
            <person name="Durbin R.M."/>
            <person name="Hubbard T."/>
            <person name="Wooster R."/>
            <person name="Dunham I."/>
            <person name="Carter N.P."/>
            <person name="McVean G."/>
            <person name="Ross M.T."/>
            <person name="Harrow J."/>
            <person name="Olson M.V."/>
            <person name="Beck S."/>
            <person name="Rogers J."/>
            <person name="Bentley D.R."/>
        </authorList>
    </citation>
    <scope>NUCLEOTIDE SEQUENCE [LARGE SCALE GENOMIC DNA]</scope>
</reference>
<reference key="3">
    <citation type="journal article" date="2004" name="Genome Res.">
        <title>The status, quality, and expansion of the NIH full-length cDNA project: the Mammalian Gene Collection (MGC).</title>
        <authorList>
            <consortium name="The MGC Project Team"/>
        </authorList>
    </citation>
    <scope>NUCLEOTIDE SEQUENCE [LARGE SCALE MRNA]</scope>
</reference>
<reference key="4">
    <citation type="journal article" date="2005" name="Nature">
        <title>Nucleolar proteome dynamics.</title>
        <authorList>
            <person name="Andersen J.S."/>
            <person name="Lam Y.W."/>
            <person name="Leung A.K.L."/>
            <person name="Ong S.-E."/>
            <person name="Lyon C.E."/>
            <person name="Lamond A.I."/>
            <person name="Mann M."/>
        </authorList>
    </citation>
    <scope>IDENTIFICATION BY MASS SPECTROMETRY</scope>
    <scope>SUBCELLULAR LOCATION [LARGE SCALE ANALYSIS]</scope>
</reference>
<evidence type="ECO:0000250" key="1">
    <source>
        <dbReference type="UniProtKB" id="B0V0U5"/>
    </source>
</evidence>
<evidence type="ECO:0000269" key="2">
    <source>
    </source>
</evidence>
<evidence type="ECO:0000305" key="3"/>
<feature type="chain" id="PRO_0000050720" description="Unhealthy ribosome biogenesis protein 2 homolog">
    <location>
        <begin position="1"/>
        <end position="1524"/>
    </location>
</feature>
<feature type="sequence variant" id="VAR_034031" description="In dbSNP:rs3811473.">
    <original>V</original>
    <variation>G</variation>
    <location>
        <position position="778"/>
    </location>
</feature>
<feature type="sequence variant" id="VAR_046975" description="In dbSNP:rs12142450.">
    <original>V</original>
    <variation>M</variation>
    <location>
        <position position="1400"/>
    </location>
</feature>